<dbReference type="EC" id="6.1.1.17" evidence="1"/>
<dbReference type="EMBL" id="CR936503">
    <property type="protein sequence ID" value="CAI54592.1"/>
    <property type="molecule type" value="Genomic_DNA"/>
</dbReference>
<dbReference type="RefSeq" id="WP_011374000.1">
    <property type="nucleotide sequence ID" value="NC_007576.1"/>
</dbReference>
<dbReference type="SMR" id="Q38YY5"/>
<dbReference type="STRING" id="314315.LCA_0290"/>
<dbReference type="KEGG" id="lsa:LCA_0290"/>
<dbReference type="eggNOG" id="COG0008">
    <property type="taxonomic scope" value="Bacteria"/>
</dbReference>
<dbReference type="HOGENOM" id="CLU_015768_6_1_9"/>
<dbReference type="OrthoDB" id="9807503at2"/>
<dbReference type="Proteomes" id="UP000002707">
    <property type="component" value="Chromosome"/>
</dbReference>
<dbReference type="GO" id="GO:0005829">
    <property type="term" value="C:cytosol"/>
    <property type="evidence" value="ECO:0007669"/>
    <property type="project" value="TreeGrafter"/>
</dbReference>
<dbReference type="GO" id="GO:0005524">
    <property type="term" value="F:ATP binding"/>
    <property type="evidence" value="ECO:0007669"/>
    <property type="project" value="UniProtKB-UniRule"/>
</dbReference>
<dbReference type="GO" id="GO:0004818">
    <property type="term" value="F:glutamate-tRNA ligase activity"/>
    <property type="evidence" value="ECO:0007669"/>
    <property type="project" value="UniProtKB-UniRule"/>
</dbReference>
<dbReference type="GO" id="GO:0000049">
    <property type="term" value="F:tRNA binding"/>
    <property type="evidence" value="ECO:0007669"/>
    <property type="project" value="InterPro"/>
</dbReference>
<dbReference type="GO" id="GO:0008270">
    <property type="term" value="F:zinc ion binding"/>
    <property type="evidence" value="ECO:0007669"/>
    <property type="project" value="InterPro"/>
</dbReference>
<dbReference type="GO" id="GO:0006424">
    <property type="term" value="P:glutamyl-tRNA aminoacylation"/>
    <property type="evidence" value="ECO:0007669"/>
    <property type="project" value="UniProtKB-UniRule"/>
</dbReference>
<dbReference type="CDD" id="cd00808">
    <property type="entry name" value="GluRS_core"/>
    <property type="match status" value="1"/>
</dbReference>
<dbReference type="FunFam" id="1.10.10.350:FF:000002">
    <property type="entry name" value="Glutamate--tRNA ligase"/>
    <property type="match status" value="1"/>
</dbReference>
<dbReference type="FunFam" id="3.40.50.620:FF:000007">
    <property type="entry name" value="Glutamate--tRNA ligase"/>
    <property type="match status" value="1"/>
</dbReference>
<dbReference type="Gene3D" id="1.10.10.350">
    <property type="match status" value="1"/>
</dbReference>
<dbReference type="Gene3D" id="3.40.50.620">
    <property type="entry name" value="HUPs"/>
    <property type="match status" value="1"/>
</dbReference>
<dbReference type="HAMAP" id="MF_00022">
    <property type="entry name" value="Glu_tRNA_synth_type1"/>
    <property type="match status" value="1"/>
</dbReference>
<dbReference type="InterPro" id="IPR045462">
    <property type="entry name" value="aa-tRNA-synth_I_cd-bd"/>
</dbReference>
<dbReference type="InterPro" id="IPR020751">
    <property type="entry name" value="aa-tRNA-synth_I_codon-bd_sub2"/>
</dbReference>
<dbReference type="InterPro" id="IPR001412">
    <property type="entry name" value="aa-tRNA-synth_I_CS"/>
</dbReference>
<dbReference type="InterPro" id="IPR008925">
    <property type="entry name" value="aa_tRNA-synth_I_cd-bd_sf"/>
</dbReference>
<dbReference type="InterPro" id="IPR004527">
    <property type="entry name" value="Glu-tRNA-ligase_bac/mito"/>
</dbReference>
<dbReference type="InterPro" id="IPR000924">
    <property type="entry name" value="Glu/Gln-tRNA-synth"/>
</dbReference>
<dbReference type="InterPro" id="IPR020058">
    <property type="entry name" value="Glu/Gln-tRNA-synth_Ib_cat-dom"/>
</dbReference>
<dbReference type="InterPro" id="IPR049940">
    <property type="entry name" value="GluQ/Sye"/>
</dbReference>
<dbReference type="InterPro" id="IPR033910">
    <property type="entry name" value="GluRS_core"/>
</dbReference>
<dbReference type="InterPro" id="IPR014729">
    <property type="entry name" value="Rossmann-like_a/b/a_fold"/>
</dbReference>
<dbReference type="NCBIfam" id="TIGR00464">
    <property type="entry name" value="gltX_bact"/>
    <property type="match status" value="1"/>
</dbReference>
<dbReference type="PANTHER" id="PTHR43311">
    <property type="entry name" value="GLUTAMATE--TRNA LIGASE"/>
    <property type="match status" value="1"/>
</dbReference>
<dbReference type="PANTHER" id="PTHR43311:SF2">
    <property type="entry name" value="GLUTAMATE--TRNA LIGASE, MITOCHONDRIAL-RELATED"/>
    <property type="match status" value="1"/>
</dbReference>
<dbReference type="Pfam" id="PF19269">
    <property type="entry name" value="Anticodon_2"/>
    <property type="match status" value="1"/>
</dbReference>
<dbReference type="Pfam" id="PF00749">
    <property type="entry name" value="tRNA-synt_1c"/>
    <property type="match status" value="1"/>
</dbReference>
<dbReference type="PRINTS" id="PR00987">
    <property type="entry name" value="TRNASYNTHGLU"/>
</dbReference>
<dbReference type="SUPFAM" id="SSF48163">
    <property type="entry name" value="An anticodon-binding domain of class I aminoacyl-tRNA synthetases"/>
    <property type="match status" value="1"/>
</dbReference>
<dbReference type="SUPFAM" id="SSF52374">
    <property type="entry name" value="Nucleotidylyl transferase"/>
    <property type="match status" value="1"/>
</dbReference>
<dbReference type="PROSITE" id="PS00178">
    <property type="entry name" value="AA_TRNA_LIGASE_I"/>
    <property type="match status" value="1"/>
</dbReference>
<name>SYE_LATSS</name>
<accession>Q38YY5</accession>
<organism>
    <name type="scientific">Latilactobacillus sakei subsp. sakei (strain 23K)</name>
    <name type="common">Lactobacillus sakei subsp. sakei</name>
    <dbReference type="NCBI Taxonomy" id="314315"/>
    <lineage>
        <taxon>Bacteria</taxon>
        <taxon>Bacillati</taxon>
        <taxon>Bacillota</taxon>
        <taxon>Bacilli</taxon>
        <taxon>Lactobacillales</taxon>
        <taxon>Lactobacillaceae</taxon>
        <taxon>Latilactobacillus</taxon>
    </lineage>
</organism>
<comment type="function">
    <text evidence="1">Catalyzes the attachment of glutamate to tRNA(Glu) in a two-step reaction: glutamate is first activated by ATP to form Glu-AMP and then transferred to the acceptor end of tRNA(Glu).</text>
</comment>
<comment type="catalytic activity">
    <reaction evidence="1">
        <text>tRNA(Glu) + L-glutamate + ATP = L-glutamyl-tRNA(Glu) + AMP + diphosphate</text>
        <dbReference type="Rhea" id="RHEA:23540"/>
        <dbReference type="Rhea" id="RHEA-COMP:9663"/>
        <dbReference type="Rhea" id="RHEA-COMP:9680"/>
        <dbReference type="ChEBI" id="CHEBI:29985"/>
        <dbReference type="ChEBI" id="CHEBI:30616"/>
        <dbReference type="ChEBI" id="CHEBI:33019"/>
        <dbReference type="ChEBI" id="CHEBI:78442"/>
        <dbReference type="ChEBI" id="CHEBI:78520"/>
        <dbReference type="ChEBI" id="CHEBI:456215"/>
        <dbReference type="EC" id="6.1.1.17"/>
    </reaction>
</comment>
<comment type="subunit">
    <text evidence="1">Monomer.</text>
</comment>
<comment type="subcellular location">
    <subcellularLocation>
        <location evidence="1">Cytoplasm</location>
    </subcellularLocation>
</comment>
<comment type="similarity">
    <text evidence="1">Belongs to the class-I aminoacyl-tRNA synthetase family. Glutamate--tRNA ligase type 1 subfamily.</text>
</comment>
<gene>
    <name evidence="1" type="primary">gltX</name>
    <name type="ordered locus">LCA_0290</name>
</gene>
<sequence>MAKNKIRVRYAPSPTGHLHIGNARTALFNYLFARHNKGTFVIRIEDTDTKRNIADGENSQLDNLKWLGMDWDEGPDKPGNYGPYRQSERREIYTPLIQELVEKGLAYESYKTEDELTAEREAQKAAGEAPRYVYEYEGMSDDEIKASQEAARAKGLQPVVRLRLPKDHVYKFDDIVKGEISFESDRLGGDFVIMKRDGMPTYNFAVVVDDHLMEITHVLRGDDHIANTPKQLAVYEAFGWEPPIFGHMTLIINTETGKKLSKRDESVLQFIEQYRELGYLPEAMFNFIALLGWSPVGESELFNRQEFIKQFDPRRLSKSPASFDQKKLEWVNNQYVKQSDPNKIMDLSLDSLIKAGKIAANPDSKTIEWARHLIALYQDQMSYTAQIVEMSDVFFEEPEQLDAEALEELNNETAPVVLKEFSERLKDLTLFTAPRIMQIIKGIQKDTKIKGRLLYMPIRIATTREMHGPSLPDSIELLGKDRVLAHLEKTLAEIK</sequence>
<proteinExistence type="inferred from homology"/>
<reference key="1">
    <citation type="journal article" date="2005" name="Nat. Biotechnol.">
        <title>The complete genome sequence of the meat-borne lactic acid bacterium Lactobacillus sakei 23K.</title>
        <authorList>
            <person name="Chaillou S."/>
            <person name="Champomier-Verges M.-C."/>
            <person name="Cornet M."/>
            <person name="Crutz-Le Coq A.-M."/>
            <person name="Dudez A.-M."/>
            <person name="Martin V."/>
            <person name="Beaufils S."/>
            <person name="Darbon-Rongere E."/>
            <person name="Bossy R."/>
            <person name="Loux V."/>
            <person name="Zagorec M."/>
        </authorList>
    </citation>
    <scope>NUCLEOTIDE SEQUENCE [LARGE SCALE GENOMIC DNA]</scope>
    <source>
        <strain>23K</strain>
    </source>
</reference>
<evidence type="ECO:0000255" key="1">
    <source>
        <dbReference type="HAMAP-Rule" id="MF_00022"/>
    </source>
</evidence>
<keyword id="KW-0030">Aminoacyl-tRNA synthetase</keyword>
<keyword id="KW-0067">ATP-binding</keyword>
<keyword id="KW-0963">Cytoplasm</keyword>
<keyword id="KW-0436">Ligase</keyword>
<keyword id="KW-0547">Nucleotide-binding</keyword>
<keyword id="KW-0648">Protein biosynthesis</keyword>
<keyword id="KW-1185">Reference proteome</keyword>
<feature type="chain" id="PRO_0000237367" description="Glutamate--tRNA ligase">
    <location>
        <begin position="1"/>
        <end position="495"/>
    </location>
</feature>
<feature type="short sequence motif" description="'HIGH' region" evidence="1">
    <location>
        <begin position="12"/>
        <end position="22"/>
    </location>
</feature>
<feature type="short sequence motif" description="'KMSKS' region" evidence="1">
    <location>
        <begin position="259"/>
        <end position="263"/>
    </location>
</feature>
<feature type="binding site" evidence="1">
    <location>
        <position position="262"/>
    </location>
    <ligand>
        <name>ATP</name>
        <dbReference type="ChEBI" id="CHEBI:30616"/>
    </ligand>
</feature>
<protein>
    <recommendedName>
        <fullName evidence="1">Glutamate--tRNA ligase</fullName>
        <ecNumber evidence="1">6.1.1.17</ecNumber>
    </recommendedName>
    <alternativeName>
        <fullName evidence="1">Glutamyl-tRNA synthetase</fullName>
        <shortName evidence="1">GluRS</shortName>
    </alternativeName>
</protein>